<reference key="1">
    <citation type="journal article" date="2015" name="Genome Announc.">
        <title>Genome sequence of Aspergillus flavus NRRL 3357, a strain that causes aflatoxin contamination of food and feed.</title>
        <authorList>
            <person name="Nierman W.C."/>
            <person name="Yu J."/>
            <person name="Fedorova-Abrams N.D."/>
            <person name="Losada L."/>
            <person name="Cleveland T.E."/>
            <person name="Bhatnagar D."/>
            <person name="Bennett J.W."/>
            <person name="Dean R."/>
            <person name="Payne G.A."/>
        </authorList>
    </citation>
    <scope>NUCLEOTIDE SEQUENCE [LARGE SCALE GENOMIC DNA]</scope>
    <source>
        <strain>ATCC 200026 / FGSC A1120 / IAM 13836 / NRRL 3357 / JCM 12722 / SRRC 167</strain>
    </source>
</reference>
<comment type="function">
    <text evidence="1">Involved in maceration and soft-rotting of plant tissue.</text>
</comment>
<comment type="catalytic activity">
    <reaction>
        <text>[(1-&gt;4)-alpha-D-galacturonosyl methyl ester](n) + n H2O = [(1-&gt;4)-alpha-D-galacturonosyl](n) + n methanol + n H(+)</text>
        <dbReference type="Rhea" id="RHEA:22380"/>
        <dbReference type="Rhea" id="RHEA-COMP:14570"/>
        <dbReference type="Rhea" id="RHEA-COMP:14573"/>
        <dbReference type="ChEBI" id="CHEBI:15377"/>
        <dbReference type="ChEBI" id="CHEBI:15378"/>
        <dbReference type="ChEBI" id="CHEBI:17790"/>
        <dbReference type="ChEBI" id="CHEBI:140522"/>
        <dbReference type="ChEBI" id="CHEBI:140523"/>
        <dbReference type="EC" id="3.1.1.11"/>
    </reaction>
</comment>
<comment type="pathway">
    <text>Glycan metabolism; pectin degradation; 2-dehydro-3-deoxy-D-gluconate from pectin: step 1/5.</text>
</comment>
<comment type="subcellular location">
    <subcellularLocation>
        <location evidence="1">Secreted</location>
    </subcellularLocation>
</comment>
<comment type="similarity">
    <text evidence="4">Belongs to the pectinesterase family.</text>
</comment>
<protein>
    <recommendedName>
        <fullName>Probable pectinesterase A</fullName>
        <ecNumber>3.1.1.11</ecNumber>
    </recommendedName>
    <alternativeName>
        <fullName>Pectin methylesterase A</fullName>
    </alternativeName>
</protein>
<feature type="signal peptide" evidence="2">
    <location>
        <begin position="1"/>
        <end position="19"/>
    </location>
</feature>
<feature type="chain" id="PRO_0000394080" description="Probable pectinesterase A">
    <location>
        <begin position="20"/>
        <end position="324"/>
    </location>
</feature>
<feature type="active site" description="Proton donor" evidence="3">
    <location>
        <position position="165"/>
    </location>
</feature>
<feature type="active site" description="Nucleophile" evidence="3">
    <location>
        <position position="186"/>
    </location>
</feature>
<feature type="binding site" evidence="1">
    <location>
        <position position="142"/>
    </location>
    <ligand>
        <name>substrate</name>
    </ligand>
</feature>
<feature type="binding site" evidence="1">
    <location>
        <position position="246"/>
    </location>
    <ligand>
        <name>substrate</name>
    </ligand>
</feature>
<feature type="binding site" evidence="1">
    <location>
        <position position="248"/>
    </location>
    <ligand>
        <name>substrate</name>
    </ligand>
</feature>
<feature type="site" description="Transition state stabilizer" evidence="1">
    <location>
        <position position="164"/>
    </location>
</feature>
<feature type="glycosylation site" description="N-linked (GlcNAc...) asparagine" evidence="2">
    <location>
        <position position="285"/>
    </location>
</feature>
<name>PMEA_ASPFN</name>
<proteinExistence type="inferred from homology"/>
<dbReference type="EC" id="3.1.1.11"/>
<dbReference type="EMBL" id="EQ963482">
    <property type="protein sequence ID" value="EED47500.1"/>
    <property type="molecule type" value="Genomic_DNA"/>
</dbReference>
<dbReference type="RefSeq" id="XP_002382342.1">
    <property type="nucleotide sequence ID" value="XM_002382301.1"/>
</dbReference>
<dbReference type="SMR" id="B8NPS7"/>
<dbReference type="STRING" id="332952.B8NPS7"/>
<dbReference type="GlyCosmos" id="B8NPS7">
    <property type="glycosylation" value="1 site, No reported glycans"/>
</dbReference>
<dbReference type="EnsemblFungi" id="EED47500">
    <property type="protein sequence ID" value="EED47500"/>
    <property type="gene ID" value="AFLA_001410"/>
</dbReference>
<dbReference type="VEuPathDB" id="FungiDB:AFLA_011462"/>
<dbReference type="eggNOG" id="ENOG502QT6U">
    <property type="taxonomic scope" value="Eukaryota"/>
</dbReference>
<dbReference type="HOGENOM" id="CLU_012243_1_2_1"/>
<dbReference type="OMA" id="CQFSGYQ"/>
<dbReference type="UniPathway" id="UPA00545">
    <property type="reaction ID" value="UER00823"/>
</dbReference>
<dbReference type="GO" id="GO:0005576">
    <property type="term" value="C:extracellular region"/>
    <property type="evidence" value="ECO:0007669"/>
    <property type="project" value="UniProtKB-SubCell"/>
</dbReference>
<dbReference type="GO" id="GO:0030599">
    <property type="term" value="F:pectinesterase activity"/>
    <property type="evidence" value="ECO:0007669"/>
    <property type="project" value="UniProtKB-EC"/>
</dbReference>
<dbReference type="GO" id="GO:0042545">
    <property type="term" value="P:cell wall modification"/>
    <property type="evidence" value="ECO:0007669"/>
    <property type="project" value="InterPro"/>
</dbReference>
<dbReference type="GO" id="GO:0045490">
    <property type="term" value="P:pectin catabolic process"/>
    <property type="evidence" value="ECO:0007669"/>
    <property type="project" value="UniProtKB-UniPathway"/>
</dbReference>
<dbReference type="FunFam" id="2.160.20.10:FF:000014">
    <property type="entry name" value="Pectinesterase"/>
    <property type="match status" value="1"/>
</dbReference>
<dbReference type="Gene3D" id="2.160.20.10">
    <property type="entry name" value="Single-stranded right-handed beta-helix, Pectin lyase-like"/>
    <property type="match status" value="1"/>
</dbReference>
<dbReference type="InterPro" id="IPR012334">
    <property type="entry name" value="Pectin_lyas_fold"/>
</dbReference>
<dbReference type="InterPro" id="IPR011050">
    <property type="entry name" value="Pectin_lyase_fold/virulence"/>
</dbReference>
<dbReference type="InterPro" id="IPR033131">
    <property type="entry name" value="Pectinesterase_Asp_AS"/>
</dbReference>
<dbReference type="InterPro" id="IPR000070">
    <property type="entry name" value="Pectinesterase_cat"/>
</dbReference>
<dbReference type="PANTHER" id="PTHR31321">
    <property type="entry name" value="ACYL-COA THIOESTER HYDROLASE YBHC-RELATED"/>
    <property type="match status" value="1"/>
</dbReference>
<dbReference type="PANTHER" id="PTHR31321:SF57">
    <property type="entry name" value="PECTINESTERASE 53-RELATED"/>
    <property type="match status" value="1"/>
</dbReference>
<dbReference type="Pfam" id="PF01095">
    <property type="entry name" value="Pectinesterase"/>
    <property type="match status" value="1"/>
</dbReference>
<dbReference type="SUPFAM" id="SSF51126">
    <property type="entry name" value="Pectin lyase-like"/>
    <property type="match status" value="1"/>
</dbReference>
<dbReference type="PROSITE" id="PS00503">
    <property type="entry name" value="PECTINESTERASE_2"/>
    <property type="match status" value="1"/>
</dbReference>
<sequence>MHGSLLKLALLSFSLASSAAVLPRDTGRTSAPSGCSTVGTSGDYSTIGDALTALGSSTADACIYIAAGTYEEQLVINYAGHLTLYGETTDTQTYKQNTVTITHTISSPEAGSLDNSATVNIKSDLVSVYNINIANGYGSGAQAVALVANADQLGFYACQFTGYQDTLYAKAGHQYYINSRIEGAVDYIFGDASAWFENCDIVSNGAGYITAMSRETTSDTAWYAIDHCNIKAASGVDLTGDVYLGRPWRVLARVIYQYSVLPDIINAKGWHSMADGATPLYYEFNNTGAGSDTSDREYLSTIDAPVAKETVLGDDYKNWVDSSY</sequence>
<evidence type="ECO:0000250" key="1"/>
<evidence type="ECO:0000255" key="2"/>
<evidence type="ECO:0000255" key="3">
    <source>
        <dbReference type="PROSITE-ProRule" id="PRU10040"/>
    </source>
</evidence>
<evidence type="ECO:0000305" key="4"/>
<accession>B8NPS7</accession>
<gene>
    <name type="primary">pmeA</name>
    <name type="ORF">AFLA_001410</name>
</gene>
<organism>
    <name type="scientific">Aspergillus flavus (strain ATCC 200026 / FGSC A1120 / IAM 13836 / NRRL 3357 / JCM 12722 / SRRC 167)</name>
    <dbReference type="NCBI Taxonomy" id="332952"/>
    <lineage>
        <taxon>Eukaryota</taxon>
        <taxon>Fungi</taxon>
        <taxon>Dikarya</taxon>
        <taxon>Ascomycota</taxon>
        <taxon>Pezizomycotina</taxon>
        <taxon>Eurotiomycetes</taxon>
        <taxon>Eurotiomycetidae</taxon>
        <taxon>Eurotiales</taxon>
        <taxon>Aspergillaceae</taxon>
        <taxon>Aspergillus</taxon>
        <taxon>Aspergillus subgen. Circumdati</taxon>
    </lineage>
</organism>
<keyword id="KW-0063">Aspartyl esterase</keyword>
<keyword id="KW-0961">Cell wall biogenesis/degradation</keyword>
<keyword id="KW-0325">Glycoprotein</keyword>
<keyword id="KW-0378">Hydrolase</keyword>
<keyword id="KW-0964">Secreted</keyword>
<keyword id="KW-0732">Signal</keyword>